<comment type="function">
    <text evidence="1">The glycine cleavage system catalyzes the degradation of glycine. The P protein binds the alpha-amino group of glycine through its pyridoxal phosphate cofactor; CO(2) is released and the remaining methylamine moiety is then transferred to the lipoamide cofactor of the H protein.</text>
</comment>
<comment type="catalytic activity">
    <reaction evidence="1">
        <text>N(6)-[(R)-lipoyl]-L-lysyl-[glycine-cleavage complex H protein] + glycine + H(+) = N(6)-[(R)-S(8)-aminomethyldihydrolipoyl]-L-lysyl-[glycine-cleavage complex H protein] + CO2</text>
        <dbReference type="Rhea" id="RHEA:24304"/>
        <dbReference type="Rhea" id="RHEA-COMP:10494"/>
        <dbReference type="Rhea" id="RHEA-COMP:10495"/>
        <dbReference type="ChEBI" id="CHEBI:15378"/>
        <dbReference type="ChEBI" id="CHEBI:16526"/>
        <dbReference type="ChEBI" id="CHEBI:57305"/>
        <dbReference type="ChEBI" id="CHEBI:83099"/>
        <dbReference type="ChEBI" id="CHEBI:83143"/>
        <dbReference type="EC" id="1.4.4.2"/>
    </reaction>
</comment>
<comment type="subunit">
    <text evidence="1">The glycine cleavage system is composed of four proteins: P, T, L and H. In this organism, the P 'protein' is a heterodimer of two subunits.</text>
</comment>
<comment type="similarity">
    <text evidence="1">Belongs to the GcvP family. N-terminal subunit subfamily.</text>
</comment>
<keyword id="KW-0560">Oxidoreductase</keyword>
<keyword id="KW-1185">Reference proteome</keyword>
<accession>B9KZ42</accession>
<feature type="chain" id="PRO_1000147992" description="Probable glycine dehydrogenase (decarboxylating) subunit 1">
    <location>
        <begin position="1"/>
        <end position="448"/>
    </location>
</feature>
<evidence type="ECO:0000255" key="1">
    <source>
        <dbReference type="HAMAP-Rule" id="MF_00712"/>
    </source>
</evidence>
<dbReference type="EC" id="1.4.4.2" evidence="1"/>
<dbReference type="EMBL" id="CP001275">
    <property type="protein sequence ID" value="ACM06083.1"/>
    <property type="molecule type" value="Genomic_DNA"/>
</dbReference>
<dbReference type="RefSeq" id="WP_012642141.1">
    <property type="nucleotide sequence ID" value="NC_011959.1"/>
</dbReference>
<dbReference type="SMR" id="B9KZ42"/>
<dbReference type="STRING" id="309801.trd_0753"/>
<dbReference type="KEGG" id="tro:trd_0753"/>
<dbReference type="eggNOG" id="COG0403">
    <property type="taxonomic scope" value="Bacteria"/>
</dbReference>
<dbReference type="HOGENOM" id="CLU_004620_0_2_0"/>
<dbReference type="OrthoDB" id="9771867at2"/>
<dbReference type="Proteomes" id="UP000000447">
    <property type="component" value="Chromosome"/>
</dbReference>
<dbReference type="GO" id="GO:0004375">
    <property type="term" value="F:glycine dehydrogenase (decarboxylating) activity"/>
    <property type="evidence" value="ECO:0007669"/>
    <property type="project" value="UniProtKB-EC"/>
</dbReference>
<dbReference type="GO" id="GO:0019464">
    <property type="term" value="P:glycine decarboxylation via glycine cleavage system"/>
    <property type="evidence" value="ECO:0007669"/>
    <property type="project" value="UniProtKB-UniRule"/>
</dbReference>
<dbReference type="GO" id="GO:0009116">
    <property type="term" value="P:nucleoside metabolic process"/>
    <property type="evidence" value="ECO:0007669"/>
    <property type="project" value="InterPro"/>
</dbReference>
<dbReference type="CDD" id="cd00613">
    <property type="entry name" value="GDC-P"/>
    <property type="match status" value="1"/>
</dbReference>
<dbReference type="Gene3D" id="3.90.1150.10">
    <property type="entry name" value="Aspartate Aminotransferase, domain 1"/>
    <property type="match status" value="1"/>
</dbReference>
<dbReference type="Gene3D" id="3.40.640.10">
    <property type="entry name" value="Type I PLP-dependent aspartate aminotransferase-like (Major domain)"/>
    <property type="match status" value="1"/>
</dbReference>
<dbReference type="HAMAP" id="MF_00712">
    <property type="entry name" value="GcvPA"/>
    <property type="match status" value="1"/>
</dbReference>
<dbReference type="InterPro" id="IPR023010">
    <property type="entry name" value="GcvPA"/>
</dbReference>
<dbReference type="InterPro" id="IPR049315">
    <property type="entry name" value="GDC-P_N"/>
</dbReference>
<dbReference type="InterPro" id="IPR020581">
    <property type="entry name" value="GDC_P"/>
</dbReference>
<dbReference type="InterPro" id="IPR015424">
    <property type="entry name" value="PyrdxlP-dep_Trfase"/>
</dbReference>
<dbReference type="InterPro" id="IPR015421">
    <property type="entry name" value="PyrdxlP-dep_Trfase_major"/>
</dbReference>
<dbReference type="InterPro" id="IPR015422">
    <property type="entry name" value="PyrdxlP-dep_Trfase_small"/>
</dbReference>
<dbReference type="NCBIfam" id="NF001696">
    <property type="entry name" value="PRK00451.1"/>
    <property type="match status" value="1"/>
</dbReference>
<dbReference type="PANTHER" id="PTHR42806">
    <property type="entry name" value="GLYCINE CLEAVAGE SYSTEM P-PROTEIN"/>
    <property type="match status" value="1"/>
</dbReference>
<dbReference type="PANTHER" id="PTHR42806:SF1">
    <property type="entry name" value="GLYCINE DEHYDROGENASE (DECARBOXYLATING)"/>
    <property type="match status" value="1"/>
</dbReference>
<dbReference type="Pfam" id="PF02347">
    <property type="entry name" value="GDC-P"/>
    <property type="match status" value="1"/>
</dbReference>
<dbReference type="PIRSF" id="PIRSF006815">
    <property type="entry name" value="GcvPA"/>
    <property type="match status" value="1"/>
</dbReference>
<dbReference type="SUPFAM" id="SSF53383">
    <property type="entry name" value="PLP-dependent transferases"/>
    <property type="match status" value="1"/>
</dbReference>
<sequence>MVFSPHTADDRARMLQEIGVERLEELFAAIPASYRFPQLDLPPAISEAEIYRELLEWSMQNFSTATTASFLGAGSYNHYVPAVVQQILWRGEFYTAYTPYQPEVSQGTLQAIYEFQSLICLLTGMEVSNASMYDGATALAEGALLCVSPPRGRNKIVVAGTVHPHYRSVLRTYTRGLPVSIVEVPIPETLRLQPNDVAQYLDDATACLVVQYPNFYGRIEDLAGFAERAHAVGARLVVSVYPIALGLLRPPGELGADVVTGEGQCLGIPQSFGGPALGILATRMELVRHLPGRLIGATVDREGKRGFVMVLQTREQHIRREKATSNICTNQGLMALAATVYLSTLGKQGLRKVAELCYHKAHYLAERIADLPAWNVIGDGPFFNEFAVRCPRDPREINAFLLERGIIGGLALGDLVPGQQDLMLLCATELTTREQIDRLVEALREATA</sequence>
<organism>
    <name type="scientific">Thermomicrobium roseum (strain ATCC 27502 / DSM 5159 / P-2)</name>
    <dbReference type="NCBI Taxonomy" id="309801"/>
    <lineage>
        <taxon>Bacteria</taxon>
        <taxon>Pseudomonadati</taxon>
        <taxon>Thermomicrobiota</taxon>
        <taxon>Thermomicrobia</taxon>
        <taxon>Thermomicrobiales</taxon>
        <taxon>Thermomicrobiaceae</taxon>
        <taxon>Thermomicrobium</taxon>
    </lineage>
</organism>
<reference key="1">
    <citation type="journal article" date="2009" name="PLoS ONE">
        <title>Complete genome sequence of the aerobic CO-oxidizing thermophile Thermomicrobium roseum.</title>
        <authorList>
            <person name="Wu D."/>
            <person name="Raymond J."/>
            <person name="Wu M."/>
            <person name="Chatterji S."/>
            <person name="Ren Q."/>
            <person name="Graham J.E."/>
            <person name="Bryant D.A."/>
            <person name="Robb F."/>
            <person name="Colman A."/>
            <person name="Tallon L.J."/>
            <person name="Badger J.H."/>
            <person name="Madupu R."/>
            <person name="Ward N.L."/>
            <person name="Eisen J.A."/>
        </authorList>
    </citation>
    <scope>NUCLEOTIDE SEQUENCE [LARGE SCALE GENOMIC DNA]</scope>
    <source>
        <strain>ATCC 27502 / DSM 5159 / P-2</strain>
    </source>
</reference>
<protein>
    <recommendedName>
        <fullName evidence="1">Probable glycine dehydrogenase (decarboxylating) subunit 1</fullName>
        <ecNumber evidence="1">1.4.4.2</ecNumber>
    </recommendedName>
    <alternativeName>
        <fullName evidence="1">Glycine cleavage system P-protein subunit 1</fullName>
    </alternativeName>
    <alternativeName>
        <fullName evidence="1">Glycine decarboxylase subunit 1</fullName>
    </alternativeName>
    <alternativeName>
        <fullName evidence="1">Glycine dehydrogenase (aminomethyl-transferring) subunit 1</fullName>
    </alternativeName>
</protein>
<proteinExistence type="inferred from homology"/>
<gene>
    <name evidence="1" type="primary">gcvPA</name>
    <name type="ordered locus">trd_0753</name>
</gene>
<name>GCSPA_THERP</name>